<comment type="function">
    <text evidence="1">Presumably involved in the processing and regular turnover of intracellular proteins. Catalyzes the removal of unsubstituted N-terminal amino acids from various peptides.</text>
</comment>
<comment type="catalytic activity">
    <reaction evidence="1">
        <text>Release of an N-terminal amino acid, Xaa-|-Yaa-, in which Xaa is preferably Leu, but may be other amino acids including Pro although not Arg or Lys, and Yaa may be Pro. Amino acid amides and methyl esters are also readily hydrolyzed, but rates on arylamides are exceedingly low.</text>
        <dbReference type="EC" id="3.4.11.1"/>
    </reaction>
</comment>
<comment type="catalytic activity">
    <reaction evidence="1">
        <text>Release of an N-terminal amino acid, preferentially leucine, but not glutamic or aspartic acids.</text>
        <dbReference type="EC" id="3.4.11.10"/>
    </reaction>
</comment>
<comment type="cofactor">
    <cofactor evidence="1">
        <name>Mn(2+)</name>
        <dbReference type="ChEBI" id="CHEBI:29035"/>
    </cofactor>
    <text evidence="1">Binds 2 manganese ions per subunit.</text>
</comment>
<comment type="subcellular location">
    <subcellularLocation>
        <location evidence="1">Cytoplasm</location>
    </subcellularLocation>
</comment>
<comment type="similarity">
    <text evidence="1">Belongs to the peptidase M17 family.</text>
</comment>
<evidence type="ECO:0000255" key="1">
    <source>
        <dbReference type="HAMAP-Rule" id="MF_00181"/>
    </source>
</evidence>
<proteinExistence type="inferred from homology"/>
<sequence>MEFSVKSGSPEKQRSACIVVGVFEPRRLSPIAEQLDKISDGYISALLRRGELEGKVGQTLLLHHVPNILSERILLIGCGKERELDERQYKQVIQKTINTLNDTGSMEAVCFLTELHVKGRNTYWKVRQAVETSKEALYSFDQLKSNKVEPRRPLRKLVFNVPTRRELTSGERAIQHGLAVAAGVKAAKDLGNMPPNICNAAYLASQARQLADAYSKNITTRVIGEQQMKELGMNAYLAVGQGSQNESLMSVIEYKGNPDAEARPIVLVGKGVTFDTGGISLKPGEAMDEMKYDMCGAASVYGVMRMVAELNLPLNVVGVLAGCENMPGGRAYRPGDVLTTMSGQTVEVLNTDAEGRLVLCDALTYVERFDPEVVIDVATLTGACVIALGHHISGLLSNHNPLAHELIGASEQAGDRAWRLPMADEYQDQLESNFADMANIGGRPGGAITAACFLARFTRKYNWAHLDVAGTAWRSGKAKGATGRPVALLSQFLLNRAGLNGDD</sequence>
<protein>
    <recommendedName>
        <fullName evidence="1">Probable cytosol aminopeptidase</fullName>
        <ecNumber evidence="1">3.4.11.1</ecNumber>
    </recommendedName>
    <alternativeName>
        <fullName evidence="1">Leucine aminopeptidase</fullName>
        <shortName evidence="1">LAP</shortName>
        <ecNumber evidence="1">3.4.11.10</ecNumber>
    </alternativeName>
    <alternativeName>
        <fullName evidence="1">Leucyl aminopeptidase</fullName>
    </alternativeName>
</protein>
<reference key="1">
    <citation type="journal article" date="2008" name="Environ. Microbiol.">
        <title>The genome of Erwinia tasmaniensis strain Et1/99, a non-pathogenic bacterium in the genus Erwinia.</title>
        <authorList>
            <person name="Kube M."/>
            <person name="Migdoll A.M."/>
            <person name="Mueller I."/>
            <person name="Kuhl H."/>
            <person name="Beck A."/>
            <person name="Reinhardt R."/>
            <person name="Geider K."/>
        </authorList>
    </citation>
    <scope>NUCLEOTIDE SEQUENCE [LARGE SCALE GENOMIC DNA]</scope>
    <source>
        <strain>DSM 17950 / CFBP 7177 / CIP 109463 / NCPPB 4357 / Et1/99</strain>
    </source>
</reference>
<accession>B2VL42</accession>
<gene>
    <name evidence="1" type="primary">pepA</name>
    <name type="ordered locus">ETA_03700</name>
</gene>
<name>AMPA_ERWT9</name>
<feature type="chain" id="PRO_1000098323" description="Probable cytosol aminopeptidase">
    <location>
        <begin position="1"/>
        <end position="503"/>
    </location>
</feature>
<feature type="active site" evidence="1">
    <location>
        <position position="282"/>
    </location>
</feature>
<feature type="active site" evidence="1">
    <location>
        <position position="356"/>
    </location>
</feature>
<feature type="binding site" evidence="1">
    <location>
        <position position="270"/>
    </location>
    <ligand>
        <name>Mn(2+)</name>
        <dbReference type="ChEBI" id="CHEBI:29035"/>
        <label>2</label>
    </ligand>
</feature>
<feature type="binding site" evidence="1">
    <location>
        <position position="275"/>
    </location>
    <ligand>
        <name>Mn(2+)</name>
        <dbReference type="ChEBI" id="CHEBI:29035"/>
        <label>1</label>
    </ligand>
</feature>
<feature type="binding site" evidence="1">
    <location>
        <position position="275"/>
    </location>
    <ligand>
        <name>Mn(2+)</name>
        <dbReference type="ChEBI" id="CHEBI:29035"/>
        <label>2</label>
    </ligand>
</feature>
<feature type="binding site" evidence="1">
    <location>
        <position position="293"/>
    </location>
    <ligand>
        <name>Mn(2+)</name>
        <dbReference type="ChEBI" id="CHEBI:29035"/>
        <label>2</label>
    </ligand>
</feature>
<feature type="binding site" evidence="1">
    <location>
        <position position="352"/>
    </location>
    <ligand>
        <name>Mn(2+)</name>
        <dbReference type="ChEBI" id="CHEBI:29035"/>
        <label>1</label>
    </ligand>
</feature>
<feature type="binding site" evidence="1">
    <location>
        <position position="354"/>
    </location>
    <ligand>
        <name>Mn(2+)</name>
        <dbReference type="ChEBI" id="CHEBI:29035"/>
        <label>1</label>
    </ligand>
</feature>
<feature type="binding site" evidence="1">
    <location>
        <position position="354"/>
    </location>
    <ligand>
        <name>Mn(2+)</name>
        <dbReference type="ChEBI" id="CHEBI:29035"/>
        <label>2</label>
    </ligand>
</feature>
<organism>
    <name type="scientific">Erwinia tasmaniensis (strain DSM 17950 / CFBP 7177 / CIP 109463 / NCPPB 4357 / Et1/99)</name>
    <dbReference type="NCBI Taxonomy" id="465817"/>
    <lineage>
        <taxon>Bacteria</taxon>
        <taxon>Pseudomonadati</taxon>
        <taxon>Pseudomonadota</taxon>
        <taxon>Gammaproteobacteria</taxon>
        <taxon>Enterobacterales</taxon>
        <taxon>Erwiniaceae</taxon>
        <taxon>Erwinia</taxon>
    </lineage>
</organism>
<keyword id="KW-0031">Aminopeptidase</keyword>
<keyword id="KW-0963">Cytoplasm</keyword>
<keyword id="KW-0378">Hydrolase</keyword>
<keyword id="KW-0464">Manganese</keyword>
<keyword id="KW-0479">Metal-binding</keyword>
<keyword id="KW-0645">Protease</keyword>
<keyword id="KW-1185">Reference proteome</keyword>
<dbReference type="EC" id="3.4.11.1" evidence="1"/>
<dbReference type="EC" id="3.4.11.10" evidence="1"/>
<dbReference type="EMBL" id="CU468135">
    <property type="protein sequence ID" value="CAO95416.1"/>
    <property type="molecule type" value="Genomic_DNA"/>
</dbReference>
<dbReference type="RefSeq" id="WP_012440131.1">
    <property type="nucleotide sequence ID" value="NC_010694.1"/>
</dbReference>
<dbReference type="SMR" id="B2VL42"/>
<dbReference type="STRING" id="465817.ETA_03700"/>
<dbReference type="MEROPS" id="M17.003"/>
<dbReference type="KEGG" id="eta:ETA_03700"/>
<dbReference type="eggNOG" id="COG0260">
    <property type="taxonomic scope" value="Bacteria"/>
</dbReference>
<dbReference type="HOGENOM" id="CLU_013734_2_2_6"/>
<dbReference type="OrthoDB" id="9809354at2"/>
<dbReference type="Proteomes" id="UP000001726">
    <property type="component" value="Chromosome"/>
</dbReference>
<dbReference type="GO" id="GO:0005737">
    <property type="term" value="C:cytoplasm"/>
    <property type="evidence" value="ECO:0007669"/>
    <property type="project" value="UniProtKB-SubCell"/>
</dbReference>
<dbReference type="GO" id="GO:0030145">
    <property type="term" value="F:manganese ion binding"/>
    <property type="evidence" value="ECO:0007669"/>
    <property type="project" value="UniProtKB-UniRule"/>
</dbReference>
<dbReference type="GO" id="GO:0070006">
    <property type="term" value="F:metalloaminopeptidase activity"/>
    <property type="evidence" value="ECO:0007669"/>
    <property type="project" value="InterPro"/>
</dbReference>
<dbReference type="GO" id="GO:0006508">
    <property type="term" value="P:proteolysis"/>
    <property type="evidence" value="ECO:0007669"/>
    <property type="project" value="UniProtKB-KW"/>
</dbReference>
<dbReference type="CDD" id="cd00433">
    <property type="entry name" value="Peptidase_M17"/>
    <property type="match status" value="1"/>
</dbReference>
<dbReference type="FunFam" id="3.40.220.10:FF:000001">
    <property type="entry name" value="Probable cytosol aminopeptidase"/>
    <property type="match status" value="1"/>
</dbReference>
<dbReference type="FunFam" id="3.40.630.10:FF:000004">
    <property type="entry name" value="Probable cytosol aminopeptidase"/>
    <property type="match status" value="1"/>
</dbReference>
<dbReference type="Gene3D" id="3.40.220.10">
    <property type="entry name" value="Leucine Aminopeptidase, subunit E, domain 1"/>
    <property type="match status" value="1"/>
</dbReference>
<dbReference type="Gene3D" id="3.40.630.10">
    <property type="entry name" value="Zn peptidases"/>
    <property type="match status" value="1"/>
</dbReference>
<dbReference type="HAMAP" id="MF_00181">
    <property type="entry name" value="Cytosol_peptidase_M17"/>
    <property type="match status" value="1"/>
</dbReference>
<dbReference type="InterPro" id="IPR011356">
    <property type="entry name" value="Leucine_aapep/pepB"/>
</dbReference>
<dbReference type="InterPro" id="IPR043472">
    <property type="entry name" value="Macro_dom-like"/>
</dbReference>
<dbReference type="InterPro" id="IPR000819">
    <property type="entry name" value="Peptidase_M17_C"/>
</dbReference>
<dbReference type="InterPro" id="IPR023042">
    <property type="entry name" value="Peptidase_M17_leu_NH2_pept"/>
</dbReference>
<dbReference type="InterPro" id="IPR008283">
    <property type="entry name" value="Peptidase_M17_N"/>
</dbReference>
<dbReference type="NCBIfam" id="NF002072">
    <property type="entry name" value="PRK00913.1-1"/>
    <property type="match status" value="1"/>
</dbReference>
<dbReference type="NCBIfam" id="NF002073">
    <property type="entry name" value="PRK00913.1-2"/>
    <property type="match status" value="1"/>
</dbReference>
<dbReference type="NCBIfam" id="NF002074">
    <property type="entry name" value="PRK00913.1-4"/>
    <property type="match status" value="1"/>
</dbReference>
<dbReference type="PANTHER" id="PTHR11963:SF23">
    <property type="entry name" value="CYTOSOL AMINOPEPTIDASE"/>
    <property type="match status" value="1"/>
</dbReference>
<dbReference type="PANTHER" id="PTHR11963">
    <property type="entry name" value="LEUCINE AMINOPEPTIDASE-RELATED"/>
    <property type="match status" value="1"/>
</dbReference>
<dbReference type="Pfam" id="PF00883">
    <property type="entry name" value="Peptidase_M17"/>
    <property type="match status" value="1"/>
</dbReference>
<dbReference type="Pfam" id="PF02789">
    <property type="entry name" value="Peptidase_M17_N"/>
    <property type="match status" value="1"/>
</dbReference>
<dbReference type="PRINTS" id="PR00481">
    <property type="entry name" value="LAMNOPPTDASE"/>
</dbReference>
<dbReference type="SUPFAM" id="SSF52949">
    <property type="entry name" value="Macro domain-like"/>
    <property type="match status" value="1"/>
</dbReference>
<dbReference type="SUPFAM" id="SSF53187">
    <property type="entry name" value="Zn-dependent exopeptidases"/>
    <property type="match status" value="1"/>
</dbReference>
<dbReference type="PROSITE" id="PS00631">
    <property type="entry name" value="CYTOSOL_AP"/>
    <property type="match status" value="1"/>
</dbReference>